<gene>
    <name evidence="1" type="primary">menG</name>
    <name type="ordered locus">BCAH187_A1676</name>
</gene>
<reference key="1">
    <citation type="submission" date="2008-10" db="EMBL/GenBank/DDBJ databases">
        <title>Genome sequence of Bacillus cereus AH187.</title>
        <authorList>
            <person name="Dodson R.J."/>
            <person name="Durkin A.S."/>
            <person name="Rosovitz M.J."/>
            <person name="Rasko D.A."/>
            <person name="Kolsto A.B."/>
            <person name="Okstad O.A."/>
            <person name="Ravel J."/>
            <person name="Sutton G."/>
        </authorList>
    </citation>
    <scope>NUCLEOTIDE SEQUENCE [LARGE SCALE GENOMIC DNA]</scope>
    <source>
        <strain>AH187</strain>
    </source>
</reference>
<proteinExistence type="inferred from homology"/>
<organism>
    <name type="scientific">Bacillus cereus (strain AH187)</name>
    <dbReference type="NCBI Taxonomy" id="405534"/>
    <lineage>
        <taxon>Bacteria</taxon>
        <taxon>Bacillati</taxon>
        <taxon>Bacillota</taxon>
        <taxon>Bacilli</taxon>
        <taxon>Bacillales</taxon>
        <taxon>Bacillaceae</taxon>
        <taxon>Bacillus</taxon>
        <taxon>Bacillus cereus group</taxon>
    </lineage>
</organism>
<name>MENG_BACC7</name>
<sequence>MQQSKEERVHDVFEKISDKYDVMNSVISFQRHKAWRKETMRIMDVKPGSKALDVCCGTADWTIALAGAVGEQGKVVGLDFSENMLSVGKQKVEALQLKQVELLHGNAMELPFEDNTFDYVTIGFGLRNVPDYMHVLKEMTRVVKPGGKVICLETSQPTMIGFRQGYILYFKYIMPLFGKLFAKSYKEYSWLQESASTFPGMKELANMFEKAGLERVQVKPFTFGVAAMHLGMKPESK</sequence>
<accession>B7HL23</accession>
<protein>
    <recommendedName>
        <fullName evidence="1">Demethylmenaquinone methyltransferase</fullName>
        <ecNumber evidence="1">2.1.1.163</ecNumber>
    </recommendedName>
</protein>
<keyword id="KW-0474">Menaquinone biosynthesis</keyword>
<keyword id="KW-0489">Methyltransferase</keyword>
<keyword id="KW-0949">S-adenosyl-L-methionine</keyword>
<keyword id="KW-0808">Transferase</keyword>
<comment type="function">
    <text evidence="1">Methyltransferase required for the conversion of demethylmenaquinol (DMKH2) to menaquinol (MKH2).</text>
</comment>
<comment type="catalytic activity">
    <reaction evidence="1">
        <text>a 2-demethylmenaquinol + S-adenosyl-L-methionine = a menaquinol + S-adenosyl-L-homocysteine + H(+)</text>
        <dbReference type="Rhea" id="RHEA:42640"/>
        <dbReference type="Rhea" id="RHEA-COMP:9539"/>
        <dbReference type="Rhea" id="RHEA-COMP:9563"/>
        <dbReference type="ChEBI" id="CHEBI:15378"/>
        <dbReference type="ChEBI" id="CHEBI:18151"/>
        <dbReference type="ChEBI" id="CHEBI:55437"/>
        <dbReference type="ChEBI" id="CHEBI:57856"/>
        <dbReference type="ChEBI" id="CHEBI:59789"/>
        <dbReference type="EC" id="2.1.1.163"/>
    </reaction>
</comment>
<comment type="pathway">
    <text evidence="1">Quinol/quinone metabolism; menaquinone biosynthesis; menaquinol from 1,4-dihydroxy-2-naphthoate: step 2/2.</text>
</comment>
<comment type="similarity">
    <text evidence="1">Belongs to the class I-like SAM-binding methyltransferase superfamily. MenG/UbiE family.</text>
</comment>
<dbReference type="EC" id="2.1.1.163" evidence="1"/>
<dbReference type="EMBL" id="CP001177">
    <property type="protein sequence ID" value="ACJ78755.1"/>
    <property type="molecule type" value="Genomic_DNA"/>
</dbReference>
<dbReference type="SMR" id="B7HL23"/>
<dbReference type="KEGG" id="bcr:BCAH187_A1676"/>
<dbReference type="HOGENOM" id="CLU_037990_0_0_9"/>
<dbReference type="UniPathway" id="UPA00079">
    <property type="reaction ID" value="UER00169"/>
</dbReference>
<dbReference type="Proteomes" id="UP000002214">
    <property type="component" value="Chromosome"/>
</dbReference>
<dbReference type="GO" id="GO:0043770">
    <property type="term" value="F:demethylmenaquinone methyltransferase activity"/>
    <property type="evidence" value="ECO:0007669"/>
    <property type="project" value="UniProtKB-UniRule"/>
</dbReference>
<dbReference type="GO" id="GO:0009234">
    <property type="term" value="P:menaquinone biosynthetic process"/>
    <property type="evidence" value="ECO:0007669"/>
    <property type="project" value="UniProtKB-UniRule"/>
</dbReference>
<dbReference type="GO" id="GO:0032259">
    <property type="term" value="P:methylation"/>
    <property type="evidence" value="ECO:0007669"/>
    <property type="project" value="UniProtKB-KW"/>
</dbReference>
<dbReference type="CDD" id="cd02440">
    <property type="entry name" value="AdoMet_MTases"/>
    <property type="match status" value="1"/>
</dbReference>
<dbReference type="FunFam" id="3.40.50.150:FF:000086">
    <property type="entry name" value="Demethylmenaquinone methyltransferase"/>
    <property type="match status" value="1"/>
</dbReference>
<dbReference type="Gene3D" id="3.40.50.150">
    <property type="entry name" value="Vaccinia Virus protein VP39"/>
    <property type="match status" value="1"/>
</dbReference>
<dbReference type="HAMAP" id="MF_01813">
    <property type="entry name" value="MenG_UbiE_methyltr"/>
    <property type="match status" value="1"/>
</dbReference>
<dbReference type="InterPro" id="IPR014122">
    <property type="entry name" value="MenG_heptapren"/>
</dbReference>
<dbReference type="InterPro" id="IPR029063">
    <property type="entry name" value="SAM-dependent_MTases_sf"/>
</dbReference>
<dbReference type="InterPro" id="IPR004033">
    <property type="entry name" value="UbiE/COQ5_MeTrFase"/>
</dbReference>
<dbReference type="InterPro" id="IPR023576">
    <property type="entry name" value="UbiE/COQ5_MeTrFase_CS"/>
</dbReference>
<dbReference type="NCBIfam" id="TIGR02752">
    <property type="entry name" value="MenG_heptapren"/>
    <property type="match status" value="1"/>
</dbReference>
<dbReference type="NCBIfam" id="TIGR01934">
    <property type="entry name" value="MenG_MenH_UbiE"/>
    <property type="match status" value="1"/>
</dbReference>
<dbReference type="NCBIfam" id="NF001243">
    <property type="entry name" value="PRK00216.1-4"/>
    <property type="match status" value="1"/>
</dbReference>
<dbReference type="NCBIfam" id="NF001244">
    <property type="entry name" value="PRK00216.1-5"/>
    <property type="match status" value="1"/>
</dbReference>
<dbReference type="PANTHER" id="PTHR43591:SF24">
    <property type="entry name" value="2-METHOXY-6-POLYPRENYL-1,4-BENZOQUINOL METHYLASE, MITOCHONDRIAL"/>
    <property type="match status" value="1"/>
</dbReference>
<dbReference type="PANTHER" id="PTHR43591">
    <property type="entry name" value="METHYLTRANSFERASE"/>
    <property type="match status" value="1"/>
</dbReference>
<dbReference type="Pfam" id="PF01209">
    <property type="entry name" value="Ubie_methyltran"/>
    <property type="match status" value="1"/>
</dbReference>
<dbReference type="SUPFAM" id="SSF53335">
    <property type="entry name" value="S-adenosyl-L-methionine-dependent methyltransferases"/>
    <property type="match status" value="1"/>
</dbReference>
<dbReference type="PROSITE" id="PS51608">
    <property type="entry name" value="SAM_MT_UBIE"/>
    <property type="match status" value="1"/>
</dbReference>
<dbReference type="PROSITE" id="PS01183">
    <property type="entry name" value="UBIE_1"/>
    <property type="match status" value="1"/>
</dbReference>
<dbReference type="PROSITE" id="PS01184">
    <property type="entry name" value="UBIE_2"/>
    <property type="match status" value="1"/>
</dbReference>
<feature type="chain" id="PRO_1000187731" description="Demethylmenaquinone methyltransferase">
    <location>
        <begin position="1"/>
        <end position="237"/>
    </location>
</feature>
<feature type="binding site" evidence="1">
    <location>
        <position position="58"/>
    </location>
    <ligand>
        <name>S-adenosyl-L-methionine</name>
        <dbReference type="ChEBI" id="CHEBI:59789"/>
    </ligand>
</feature>
<feature type="binding site" evidence="1">
    <location>
        <position position="79"/>
    </location>
    <ligand>
        <name>S-adenosyl-L-methionine</name>
        <dbReference type="ChEBI" id="CHEBI:59789"/>
    </ligand>
</feature>
<feature type="binding site" evidence="1">
    <location>
        <begin position="106"/>
        <end position="107"/>
    </location>
    <ligand>
        <name>S-adenosyl-L-methionine</name>
        <dbReference type="ChEBI" id="CHEBI:59789"/>
    </ligand>
</feature>
<evidence type="ECO:0000255" key="1">
    <source>
        <dbReference type="HAMAP-Rule" id="MF_01813"/>
    </source>
</evidence>